<proteinExistence type="evidence at transcript level"/>
<comment type="function">
    <text>Destroys superoxide anion radicals which are normally produced within the cells and which are toxic to biological systems.</text>
</comment>
<comment type="catalytic activity">
    <reaction>
        <text>2 superoxide + 2 H(+) = H2O2 + O2</text>
        <dbReference type="Rhea" id="RHEA:20696"/>
        <dbReference type="ChEBI" id="CHEBI:15378"/>
        <dbReference type="ChEBI" id="CHEBI:15379"/>
        <dbReference type="ChEBI" id="CHEBI:16240"/>
        <dbReference type="ChEBI" id="CHEBI:18421"/>
        <dbReference type="EC" id="1.15.1.1"/>
    </reaction>
</comment>
<comment type="cofactor">
    <cofactor evidence="1">
        <name>Mn(2+)</name>
        <dbReference type="ChEBI" id="CHEBI:29035"/>
    </cofactor>
    <text evidence="1">Binds 1 Mn(2+) ion per subunit.</text>
</comment>
<comment type="subunit">
    <text evidence="1">Homotetramer.</text>
</comment>
<comment type="subcellular location">
    <subcellularLocation>
        <location evidence="1">Mitochondrion matrix</location>
    </subcellularLocation>
</comment>
<comment type="similarity">
    <text evidence="3">Belongs to the iron/manganese superoxide dismutase family.</text>
</comment>
<organism>
    <name type="scientific">Chlamydomonas reinhardtii</name>
    <name type="common">Chlamydomonas smithii</name>
    <dbReference type="NCBI Taxonomy" id="3055"/>
    <lineage>
        <taxon>Eukaryota</taxon>
        <taxon>Viridiplantae</taxon>
        <taxon>Chlorophyta</taxon>
        <taxon>core chlorophytes</taxon>
        <taxon>Chlorophyceae</taxon>
        <taxon>CS clade</taxon>
        <taxon>Chlamydomonadales</taxon>
        <taxon>Chlamydomonadaceae</taxon>
        <taxon>Chlamydomonas</taxon>
    </lineage>
</organism>
<protein>
    <recommendedName>
        <fullName>Superoxide dismutase [Mn], mitochondrial</fullName>
        <ecNumber>1.15.1.1</ecNumber>
    </recommendedName>
</protein>
<sequence>MAQALPPLPYDYGSLEPHVDATTMNIHHTKHHQTYVNNLNAALDKFPELKDLGLVDLNKAVGTDKLPKDVATVIRNNGGGHYNHSFFWKVMTNPSNTNGPNGDVKAAIEASFGSVDEMKAKFNAAAAGRFGSGWAWLSVKPDGSLSIDSTPNQDNPLMTALPDVAGGIPLLGLDVWEHAYYLKYQNRRPEYIAAWWNVVNWEQVAENYKAAQAGTVPL</sequence>
<gene>
    <name type="primary">SODA</name>
    <name type="synonym">SOD1</name>
</gene>
<reference key="1">
    <citation type="online journal article" date="1995" name="Plant Gene Register">
        <title>A cDNA clone encoding a manganese-superoxide dismutase from Chlamydomonas reinhardtii.</title>
        <authorList>
            <person name="Kitayama K."/>
            <person name="Kitayama M."/>
            <person name="Togasaki R.K."/>
        </authorList>
        <locator>PGR95-034</locator>
    </citation>
    <scope>NUCLEOTIDE SEQUENCE [MRNA]</scope>
    <source>
        <strain>137c / CC-125</strain>
    </source>
</reference>
<accession>Q42684</accession>
<dbReference type="EC" id="1.15.1.1"/>
<dbReference type="EMBL" id="U24500">
    <property type="protein sequence ID" value="AAA80639.1"/>
    <property type="molecule type" value="mRNA"/>
</dbReference>
<dbReference type="PIR" id="T08047">
    <property type="entry name" value="T08047"/>
</dbReference>
<dbReference type="RefSeq" id="XP_001700058.1">
    <property type="nucleotide sequence ID" value="XM_001700006.1"/>
</dbReference>
<dbReference type="SMR" id="Q42684"/>
<dbReference type="PaxDb" id="3055-EDP07754"/>
<dbReference type="ProMEX" id="Q42684"/>
<dbReference type="EnsemblPlants" id="PNW86799">
    <property type="protein sequence ID" value="PNW86799"/>
    <property type="gene ID" value="CHLRE_02g096150v5"/>
</dbReference>
<dbReference type="Gramene" id="PNW86799">
    <property type="protein sequence ID" value="PNW86799"/>
    <property type="gene ID" value="CHLRE_02g096150v5"/>
</dbReference>
<dbReference type="KEGG" id="cre:CHLRE_02g096150v5"/>
<dbReference type="eggNOG" id="KOG0876">
    <property type="taxonomic scope" value="Eukaryota"/>
</dbReference>
<dbReference type="HOGENOM" id="CLU_031625_0_1_1"/>
<dbReference type="OMA" id="CNVDTRE"/>
<dbReference type="OrthoDB" id="239262at2759"/>
<dbReference type="GO" id="GO:0005759">
    <property type="term" value="C:mitochondrial matrix"/>
    <property type="evidence" value="ECO:0007669"/>
    <property type="project" value="UniProtKB-SubCell"/>
</dbReference>
<dbReference type="GO" id="GO:0046872">
    <property type="term" value="F:metal ion binding"/>
    <property type="evidence" value="ECO:0007669"/>
    <property type="project" value="UniProtKB-KW"/>
</dbReference>
<dbReference type="GO" id="GO:0004784">
    <property type="term" value="F:superoxide dismutase activity"/>
    <property type="evidence" value="ECO:0007669"/>
    <property type="project" value="UniProtKB-EC"/>
</dbReference>
<dbReference type="FunFam" id="1.10.287.990:FF:000001">
    <property type="entry name" value="Superoxide dismutase"/>
    <property type="match status" value="1"/>
</dbReference>
<dbReference type="FunFam" id="3.55.40.20:FF:000001">
    <property type="entry name" value="Superoxide dismutase"/>
    <property type="match status" value="1"/>
</dbReference>
<dbReference type="Gene3D" id="1.10.287.990">
    <property type="entry name" value="Fe,Mn superoxide dismutase (SOD) domain"/>
    <property type="match status" value="1"/>
</dbReference>
<dbReference type="Gene3D" id="3.55.40.20">
    <property type="entry name" value="Iron/manganese superoxide dismutase, C-terminal domain"/>
    <property type="match status" value="1"/>
</dbReference>
<dbReference type="InterPro" id="IPR001189">
    <property type="entry name" value="Mn/Fe_SOD"/>
</dbReference>
<dbReference type="InterPro" id="IPR019833">
    <property type="entry name" value="Mn/Fe_SOD_BS"/>
</dbReference>
<dbReference type="InterPro" id="IPR019832">
    <property type="entry name" value="Mn/Fe_SOD_C"/>
</dbReference>
<dbReference type="InterPro" id="IPR019831">
    <property type="entry name" value="Mn/Fe_SOD_N"/>
</dbReference>
<dbReference type="InterPro" id="IPR036324">
    <property type="entry name" value="Mn/Fe_SOD_N_sf"/>
</dbReference>
<dbReference type="InterPro" id="IPR036314">
    <property type="entry name" value="SOD_C_sf"/>
</dbReference>
<dbReference type="PANTHER" id="PTHR43595">
    <property type="entry name" value="37S RIBOSOMAL PROTEIN S26, MITOCHONDRIAL"/>
    <property type="match status" value="1"/>
</dbReference>
<dbReference type="PANTHER" id="PTHR43595:SF2">
    <property type="entry name" value="SMALL RIBOSOMAL SUBUNIT PROTEIN MS42"/>
    <property type="match status" value="1"/>
</dbReference>
<dbReference type="Pfam" id="PF02777">
    <property type="entry name" value="Sod_Fe_C"/>
    <property type="match status" value="1"/>
</dbReference>
<dbReference type="Pfam" id="PF00081">
    <property type="entry name" value="Sod_Fe_N"/>
    <property type="match status" value="1"/>
</dbReference>
<dbReference type="PIRSF" id="PIRSF000349">
    <property type="entry name" value="SODismutase"/>
    <property type="match status" value="1"/>
</dbReference>
<dbReference type="PRINTS" id="PR01703">
    <property type="entry name" value="MNSODISMTASE"/>
</dbReference>
<dbReference type="SUPFAM" id="SSF54719">
    <property type="entry name" value="Fe,Mn superoxide dismutase (SOD), C-terminal domain"/>
    <property type="match status" value="1"/>
</dbReference>
<dbReference type="SUPFAM" id="SSF46609">
    <property type="entry name" value="Fe,Mn superoxide dismutase (SOD), N-terminal domain"/>
    <property type="match status" value="1"/>
</dbReference>
<dbReference type="PROSITE" id="PS00088">
    <property type="entry name" value="SOD_MN"/>
    <property type="match status" value="1"/>
</dbReference>
<keyword id="KW-0464">Manganese</keyword>
<keyword id="KW-0479">Metal-binding</keyword>
<keyword id="KW-0496">Mitochondrion</keyword>
<keyword id="KW-0560">Oxidoreductase</keyword>
<keyword id="KW-0809">Transit peptide</keyword>
<feature type="transit peptide" description="Mitochondrion" evidence="2">
    <location>
        <begin position="1"/>
        <end status="unknown"/>
    </location>
</feature>
<feature type="chain" id="PRO_0000032893" description="Superoxide dismutase [Mn], mitochondrial">
    <location>
        <begin status="unknown"/>
        <end position="218"/>
    </location>
</feature>
<feature type="binding site" evidence="1">
    <location>
        <position position="27"/>
    </location>
    <ligand>
        <name>Mn(2+)</name>
        <dbReference type="ChEBI" id="CHEBI:29035"/>
    </ligand>
</feature>
<feature type="binding site" evidence="1">
    <location>
        <position position="84"/>
    </location>
    <ligand>
        <name>Mn(2+)</name>
        <dbReference type="ChEBI" id="CHEBI:29035"/>
    </ligand>
</feature>
<feature type="binding site" evidence="1">
    <location>
        <position position="174"/>
    </location>
    <ligand>
        <name>Mn(2+)</name>
        <dbReference type="ChEBI" id="CHEBI:29035"/>
    </ligand>
</feature>
<feature type="binding site" evidence="1">
    <location>
        <position position="178"/>
    </location>
    <ligand>
        <name>Mn(2+)</name>
        <dbReference type="ChEBI" id="CHEBI:29035"/>
    </ligand>
</feature>
<evidence type="ECO:0000250" key="1"/>
<evidence type="ECO:0000255" key="2"/>
<evidence type="ECO:0000305" key="3"/>
<name>SODM_CHLRE</name>